<feature type="initiator methionine" description="Removed" evidence="1">
    <location>
        <position position="1"/>
    </location>
</feature>
<feature type="chain" id="PRO_0000124508" description="Small ribosomal subunit protein uS7cz/uS7cy">
    <location>
        <begin position="2"/>
        <end position="155"/>
    </location>
</feature>
<proteinExistence type="evidence at protein level"/>
<protein>
    <recommendedName>
        <fullName evidence="4">Small ribosomal subunit protein uS7cz/uS7cy</fullName>
    </recommendedName>
    <alternativeName>
        <fullName evidence="3">30S ribosomal protein S7, chloroplastic</fullName>
    </alternativeName>
</protein>
<reference key="1">
    <citation type="journal article" date="2001" name="Plant Mol. Biol.">
        <title>The plastid chromosome of spinach (Spinacia oleracea): complete nucleotide sequence and gene organization.</title>
        <authorList>
            <person name="Schmitz-Linneweber C."/>
            <person name="Maier R.M."/>
            <person name="Alcaraz J.-P."/>
            <person name="Cottet A."/>
            <person name="Herrmann R.G."/>
            <person name="Mache R."/>
        </authorList>
    </citation>
    <scope>NUCLEOTIDE SEQUENCE [LARGE SCALE GENOMIC DNA]</scope>
    <source>
        <strain>cv. Geant d'hiver</strain>
        <strain>cv. Monatol</strain>
    </source>
</reference>
<reference key="2">
    <citation type="journal article" date="2000" name="J. Biol. Chem.">
        <title>The plastid ribosomal proteins. Identification of all the proteins in the 30S subunit of an organelle ribosome (chloroplast).</title>
        <authorList>
            <person name="Yamaguchi K."/>
            <person name="von Knoblauch K."/>
            <person name="Subramanian A.R."/>
        </authorList>
    </citation>
    <scope>PROTEIN SEQUENCE OF 2-26</scope>
    <scope>SUBUNIT</scope>
    <scope>SUBCELLULAR LOCATION</scope>
    <scope>MASS SPECTROMETRY</scope>
    <source>
        <strain>cv. Alwaro</strain>
        <tissue>Leaf</tissue>
    </source>
</reference>
<reference key="3">
    <citation type="journal article" date="2007" name="Proc. Natl. Acad. Sci. U.S.A.">
        <title>Cryo-EM study of the spinach chloroplast ribosome reveals the structural and functional roles of plastid-specific ribosomal proteins.</title>
        <authorList>
            <person name="Sharma M.R."/>
            <person name="Wilson D.N."/>
            <person name="Datta P.P."/>
            <person name="Barat C."/>
            <person name="Schluenzen F."/>
            <person name="Fucini P."/>
            <person name="Agrawal R.K."/>
        </authorList>
    </citation>
    <scope>STRUCTURE BY ELECTRON MICROSCOPY (9.4 ANGSTROMS)</scope>
</reference>
<reference key="4">
    <citation type="journal article" date="2017" name="EMBO J.">
        <title>The complete structure of the chloroplast 70S ribosome in complex with translation factor pY.</title>
        <authorList>
            <person name="Bieri P."/>
            <person name="Leibundgut M."/>
            <person name="Saurer M."/>
            <person name="Boehringer D."/>
            <person name="Ban N."/>
        </authorList>
    </citation>
    <scope>STRUCTURE BY ELECTRON MICROSCOPY (3.40 ANGSTROMS)</scope>
    <scope>SUBUNIT</scope>
    <scope>SUBCELLULAR LOCATION</scope>
</reference>
<name>RR7_SPIOL</name>
<dbReference type="EMBL" id="AJ400848">
    <property type="protein sequence ID" value="CAB88773.1"/>
    <property type="molecule type" value="Genomic_DNA"/>
</dbReference>
<dbReference type="EMBL" id="AJ400848">
    <property type="protein sequence ID" value="CAB88798.1"/>
    <property type="molecule type" value="Genomic_DNA"/>
</dbReference>
<dbReference type="PDB" id="4V61">
    <property type="method" value="EM"/>
    <property type="resolution" value="9.40 A"/>
    <property type="chains" value="AG=1-155"/>
</dbReference>
<dbReference type="PDB" id="5MMJ">
    <property type="method" value="EM"/>
    <property type="resolution" value="3.65 A"/>
    <property type="chains" value="g=1-155"/>
</dbReference>
<dbReference type="PDB" id="5MMM">
    <property type="method" value="EM"/>
    <property type="resolution" value="3.40 A"/>
    <property type="chains" value="g=1-155"/>
</dbReference>
<dbReference type="PDB" id="5X8P">
    <property type="method" value="EM"/>
    <property type="resolution" value="3.40 A"/>
    <property type="chains" value="g=1-155"/>
</dbReference>
<dbReference type="PDB" id="5X8R">
    <property type="method" value="EM"/>
    <property type="resolution" value="3.70 A"/>
    <property type="chains" value="g=1-155"/>
</dbReference>
<dbReference type="PDB" id="6ERI">
    <property type="method" value="EM"/>
    <property type="resolution" value="3.00 A"/>
    <property type="chains" value="BG=2-152"/>
</dbReference>
<dbReference type="PDBsum" id="4V61"/>
<dbReference type="PDBsum" id="5MMJ"/>
<dbReference type="PDBsum" id="5MMM"/>
<dbReference type="PDBsum" id="5X8P"/>
<dbReference type="PDBsum" id="5X8R"/>
<dbReference type="PDBsum" id="6ERI"/>
<dbReference type="EMDB" id="EMD-3532"/>
<dbReference type="EMDB" id="EMD-3533"/>
<dbReference type="EMDB" id="EMD-3941"/>
<dbReference type="EMDB" id="EMD-6709"/>
<dbReference type="EMDB" id="EMD-6710"/>
<dbReference type="SMR" id="P82129"/>
<dbReference type="FunCoup" id="P82129">
    <property type="interactions" value="1486"/>
</dbReference>
<dbReference type="STRING" id="3562.P82129"/>
<dbReference type="KEGG" id="soe:2715647"/>
<dbReference type="KEGG" id="soe:2715648"/>
<dbReference type="InParanoid" id="P82129"/>
<dbReference type="OrthoDB" id="35139at2759"/>
<dbReference type="Proteomes" id="UP001155700">
    <property type="component" value="Unplaced"/>
</dbReference>
<dbReference type="GO" id="GO:0009507">
    <property type="term" value="C:chloroplast"/>
    <property type="evidence" value="ECO:0007669"/>
    <property type="project" value="UniProtKB-SubCell"/>
</dbReference>
<dbReference type="GO" id="GO:0005840">
    <property type="term" value="C:ribosome"/>
    <property type="evidence" value="ECO:0000318"/>
    <property type="project" value="GO_Central"/>
</dbReference>
<dbReference type="GO" id="GO:0015935">
    <property type="term" value="C:small ribosomal subunit"/>
    <property type="evidence" value="ECO:0007669"/>
    <property type="project" value="InterPro"/>
</dbReference>
<dbReference type="GO" id="GO:0003729">
    <property type="term" value="F:mRNA binding"/>
    <property type="evidence" value="ECO:0000318"/>
    <property type="project" value="GO_Central"/>
</dbReference>
<dbReference type="GO" id="GO:0019843">
    <property type="term" value="F:rRNA binding"/>
    <property type="evidence" value="ECO:0000318"/>
    <property type="project" value="GO_Central"/>
</dbReference>
<dbReference type="GO" id="GO:0003735">
    <property type="term" value="F:structural constituent of ribosome"/>
    <property type="evidence" value="ECO:0000318"/>
    <property type="project" value="GO_Central"/>
</dbReference>
<dbReference type="GO" id="GO:0000028">
    <property type="term" value="P:ribosomal small subunit assembly"/>
    <property type="evidence" value="ECO:0000318"/>
    <property type="project" value="GO_Central"/>
</dbReference>
<dbReference type="GO" id="GO:0006412">
    <property type="term" value="P:translation"/>
    <property type="evidence" value="ECO:0000318"/>
    <property type="project" value="GO_Central"/>
</dbReference>
<dbReference type="CDD" id="cd14871">
    <property type="entry name" value="uS7_Chloroplast"/>
    <property type="match status" value="1"/>
</dbReference>
<dbReference type="FunFam" id="1.10.455.10:FF:000001">
    <property type="entry name" value="30S ribosomal protein S7"/>
    <property type="match status" value="1"/>
</dbReference>
<dbReference type="Gene3D" id="1.10.455.10">
    <property type="entry name" value="Ribosomal protein S7 domain"/>
    <property type="match status" value="1"/>
</dbReference>
<dbReference type="HAMAP" id="MF_00480_B">
    <property type="entry name" value="Ribosomal_uS7_B"/>
    <property type="match status" value="1"/>
</dbReference>
<dbReference type="InterPro" id="IPR000235">
    <property type="entry name" value="Ribosomal_uS7"/>
</dbReference>
<dbReference type="InterPro" id="IPR005717">
    <property type="entry name" value="Ribosomal_uS7_bac/org-type"/>
</dbReference>
<dbReference type="InterPro" id="IPR020606">
    <property type="entry name" value="Ribosomal_uS7_CS"/>
</dbReference>
<dbReference type="InterPro" id="IPR023798">
    <property type="entry name" value="Ribosomal_uS7_dom"/>
</dbReference>
<dbReference type="InterPro" id="IPR036823">
    <property type="entry name" value="Ribosomal_uS7_dom_sf"/>
</dbReference>
<dbReference type="NCBIfam" id="TIGR01029">
    <property type="entry name" value="rpsG_bact"/>
    <property type="match status" value="1"/>
</dbReference>
<dbReference type="PANTHER" id="PTHR11205">
    <property type="entry name" value="RIBOSOMAL PROTEIN S7"/>
    <property type="match status" value="1"/>
</dbReference>
<dbReference type="Pfam" id="PF00177">
    <property type="entry name" value="Ribosomal_S7"/>
    <property type="match status" value="1"/>
</dbReference>
<dbReference type="PIRSF" id="PIRSF002122">
    <property type="entry name" value="RPS7p_RPS7a_RPS5e_RPS7o"/>
    <property type="match status" value="1"/>
</dbReference>
<dbReference type="SUPFAM" id="SSF47973">
    <property type="entry name" value="Ribosomal protein S7"/>
    <property type="match status" value="1"/>
</dbReference>
<dbReference type="PROSITE" id="PS00052">
    <property type="entry name" value="RIBOSOMAL_S7"/>
    <property type="match status" value="1"/>
</dbReference>
<accession>P82129</accession>
<accession>Q9LD50</accession>
<sequence>MSRRGTVEEKTAKSDPIYRNRLVNMLVNRILKHGKKSLAYQILYRAVKKIQQKTETNPLSVLRQAIRGVTPDIAVKARRVGGSTHQVPIEIGSTQGKALAIRWLLGAARKRPGRNMAFKLSSELVDAAKGSGDAVRKKEETHRMAEANRAFAHFR</sequence>
<gene>
    <name type="primary">rps7-A</name>
</gene>
<gene>
    <name type="primary">rps7-B</name>
</gene>
<keyword id="KW-0002">3D-structure</keyword>
<keyword id="KW-0150">Chloroplast</keyword>
<keyword id="KW-0903">Direct protein sequencing</keyword>
<keyword id="KW-0934">Plastid</keyword>
<keyword id="KW-1185">Reference proteome</keyword>
<keyword id="KW-0687">Ribonucleoprotein</keyword>
<keyword id="KW-0689">Ribosomal protein</keyword>
<keyword id="KW-0694">RNA-binding</keyword>
<keyword id="KW-0699">rRNA-binding</keyword>
<evidence type="ECO:0000269" key="1">
    <source>
    </source>
</evidence>
<evidence type="ECO:0000269" key="2">
    <source>
    </source>
</evidence>
<evidence type="ECO:0000303" key="3">
    <source>
    </source>
</evidence>
<evidence type="ECO:0000303" key="4">
    <source>
    </source>
</evidence>
<evidence type="ECO:0000305" key="5"/>
<evidence type="ECO:0000305" key="6">
    <source>
    </source>
</evidence>
<evidence type="ECO:0000305" key="7">
    <source>
    </source>
</evidence>
<organism>
    <name type="scientific">Spinacia oleracea</name>
    <name type="common">Spinach</name>
    <dbReference type="NCBI Taxonomy" id="3562"/>
    <lineage>
        <taxon>Eukaryota</taxon>
        <taxon>Viridiplantae</taxon>
        <taxon>Streptophyta</taxon>
        <taxon>Embryophyta</taxon>
        <taxon>Tracheophyta</taxon>
        <taxon>Spermatophyta</taxon>
        <taxon>Magnoliopsida</taxon>
        <taxon>eudicotyledons</taxon>
        <taxon>Gunneridae</taxon>
        <taxon>Pentapetalae</taxon>
        <taxon>Caryophyllales</taxon>
        <taxon>Chenopodiaceae</taxon>
        <taxon>Chenopodioideae</taxon>
        <taxon>Anserineae</taxon>
        <taxon>Spinacia</taxon>
    </lineage>
</organism>
<geneLocation type="chloroplast"/>
<comment type="function">
    <text evidence="6 7">Component of the chloroplast ribosome (chloro-ribosome), a dedicated translation machinery responsible for the synthesis of chloroplast genome-encoded proteins, including proteins of the transcription and translation machinery and components of the photosynthetic apparatus.</text>
</comment>
<comment type="subunit">
    <text evidence="1 2">Component of the chloroplast small ribosomal subunit (SSU). Mature 70S chloroplast ribosomes of higher plants consist of a small (30S) and a large (50S) subunit. The 30S small subunit contains 1 molecule of ribosomal RNA (16S rRNA) and 24 different proteins. The 50S large subunit contains 3 rRNA molecules (23S, 5S and 4.5S rRNA) and 33 different proteins.</text>
</comment>
<comment type="subcellular location">
    <subcellularLocation>
        <location evidence="1 2">Plastid</location>
        <location evidence="1 2">Chloroplast</location>
    </subcellularLocation>
</comment>
<comment type="mass spectrometry"/>
<comment type="mass spectrometry"/>
<comment type="similarity">
    <text evidence="5">Belongs to the universal ribosomal protein uS7 family.</text>
</comment>